<feature type="chain" id="PRO_0000248800" description="Proline--tRNA ligase">
    <location>
        <begin position="1"/>
        <end position="573"/>
    </location>
</feature>
<name>SYP_CALS4</name>
<reference key="1">
    <citation type="journal article" date="2002" name="Genome Res.">
        <title>A complete sequence of the T. tengcongensis genome.</title>
        <authorList>
            <person name="Bao Q."/>
            <person name="Tian Y."/>
            <person name="Li W."/>
            <person name="Xu Z."/>
            <person name="Xuan Z."/>
            <person name="Hu S."/>
            <person name="Dong W."/>
            <person name="Yang J."/>
            <person name="Chen Y."/>
            <person name="Xue Y."/>
            <person name="Xu Y."/>
            <person name="Lai X."/>
            <person name="Huang L."/>
            <person name="Dong X."/>
            <person name="Ma Y."/>
            <person name="Ling L."/>
            <person name="Tan H."/>
            <person name="Chen R."/>
            <person name="Wang J."/>
            <person name="Yu J."/>
            <person name="Yang H."/>
        </authorList>
    </citation>
    <scope>NUCLEOTIDE SEQUENCE [LARGE SCALE GENOMIC DNA]</scope>
    <source>
        <strain>DSM 15242 / JCM 11007 / NBRC 100824 / MB4</strain>
    </source>
</reference>
<keyword id="KW-0030">Aminoacyl-tRNA synthetase</keyword>
<keyword id="KW-0067">ATP-binding</keyword>
<keyword id="KW-0963">Cytoplasm</keyword>
<keyword id="KW-0436">Ligase</keyword>
<keyword id="KW-0547">Nucleotide-binding</keyword>
<keyword id="KW-0648">Protein biosynthesis</keyword>
<keyword id="KW-1185">Reference proteome</keyword>
<organism>
    <name type="scientific">Caldanaerobacter subterraneus subsp. tengcongensis (strain DSM 15242 / JCM 11007 / NBRC 100824 / MB4)</name>
    <name type="common">Thermoanaerobacter tengcongensis</name>
    <dbReference type="NCBI Taxonomy" id="273068"/>
    <lineage>
        <taxon>Bacteria</taxon>
        <taxon>Bacillati</taxon>
        <taxon>Bacillota</taxon>
        <taxon>Clostridia</taxon>
        <taxon>Thermoanaerobacterales</taxon>
        <taxon>Thermoanaerobacteraceae</taxon>
        <taxon>Caldanaerobacter</taxon>
    </lineage>
</organism>
<sequence length="573" mass="64920">MRLSQLLMPTLREVPADAEIPSHVLMLKAGLMRKLAAGIYVYLPLGKRVLKKVEEIVREEMDREGSQEVLMSALIPAELFKETGRWDVFGPEMFKLKDRNERDFCLGPTHEEVFTDLVRNEVKSYRQLPLILYQIQTKFRDERRPRFGVMRSREFIMKDAYSFDADWEGLDESFNKMYRAYCRIFDRCGLKYLVVEADPGAMGGRDSKEFMVISSVGEAVIAYCDSCGYAANEEKAECLIESRDEEMLEIEKVYTPNVKTIEELVDFLKISPSKFVKTLIYKAKGKVVAALVRGDRDINETKLLNVLSIREEELELADGALVEEVTGAKVGFAGPLGLKGEVTLVVDSEIPQLRNFIVGANETDYHIKNVNYGRDFKGDIVADIKSVVEGDRCPRCGAPLKIARGIEVGHIFKLGTKYSEALGATYTDEEGNEKPIVMGCYGIGINRTVAAIIEQHHDEKGIIWPMSVAPYHVIVVPVNVSDEEQKQIAEKIYNKLLEEKLEVLIDDRDVRAGVKFNDADLIGIPVRVTIGKKVKEGIVEIKLREREEVEEVKVEEVVKRVKQIVEEKLRELS</sequence>
<proteinExistence type="inferred from homology"/>
<evidence type="ECO:0000255" key="1">
    <source>
        <dbReference type="HAMAP-Rule" id="MF_01569"/>
    </source>
</evidence>
<gene>
    <name evidence="1" type="primary">proS</name>
    <name type="ordered locus">TTE2319</name>
</gene>
<dbReference type="EC" id="6.1.1.15" evidence="1"/>
<dbReference type="EMBL" id="AE008691">
    <property type="protein sequence ID" value="AAM25460.1"/>
    <property type="molecule type" value="Genomic_DNA"/>
</dbReference>
<dbReference type="RefSeq" id="WP_011026363.1">
    <property type="nucleotide sequence ID" value="NC_003869.1"/>
</dbReference>
<dbReference type="SMR" id="Q8R7S9"/>
<dbReference type="STRING" id="273068.TTE2319"/>
<dbReference type="KEGG" id="tte:TTE2319"/>
<dbReference type="eggNOG" id="COG0442">
    <property type="taxonomic scope" value="Bacteria"/>
</dbReference>
<dbReference type="HOGENOM" id="CLU_016739_0_0_9"/>
<dbReference type="OrthoDB" id="9809052at2"/>
<dbReference type="Proteomes" id="UP000000555">
    <property type="component" value="Chromosome"/>
</dbReference>
<dbReference type="GO" id="GO:0005829">
    <property type="term" value="C:cytosol"/>
    <property type="evidence" value="ECO:0007669"/>
    <property type="project" value="TreeGrafter"/>
</dbReference>
<dbReference type="GO" id="GO:0002161">
    <property type="term" value="F:aminoacyl-tRNA deacylase activity"/>
    <property type="evidence" value="ECO:0007669"/>
    <property type="project" value="InterPro"/>
</dbReference>
<dbReference type="GO" id="GO:0005524">
    <property type="term" value="F:ATP binding"/>
    <property type="evidence" value="ECO:0007669"/>
    <property type="project" value="UniProtKB-UniRule"/>
</dbReference>
<dbReference type="GO" id="GO:0140096">
    <property type="term" value="F:catalytic activity, acting on a protein"/>
    <property type="evidence" value="ECO:0007669"/>
    <property type="project" value="UniProtKB-ARBA"/>
</dbReference>
<dbReference type="GO" id="GO:0004827">
    <property type="term" value="F:proline-tRNA ligase activity"/>
    <property type="evidence" value="ECO:0007669"/>
    <property type="project" value="UniProtKB-UniRule"/>
</dbReference>
<dbReference type="GO" id="GO:0016740">
    <property type="term" value="F:transferase activity"/>
    <property type="evidence" value="ECO:0007669"/>
    <property type="project" value="UniProtKB-ARBA"/>
</dbReference>
<dbReference type="GO" id="GO:0006433">
    <property type="term" value="P:prolyl-tRNA aminoacylation"/>
    <property type="evidence" value="ECO:0007669"/>
    <property type="project" value="UniProtKB-UniRule"/>
</dbReference>
<dbReference type="CDD" id="cd04334">
    <property type="entry name" value="ProRS-INS"/>
    <property type="match status" value="1"/>
</dbReference>
<dbReference type="CDD" id="cd00861">
    <property type="entry name" value="ProRS_anticodon_short"/>
    <property type="match status" value="1"/>
</dbReference>
<dbReference type="CDD" id="cd00779">
    <property type="entry name" value="ProRS_core_prok"/>
    <property type="match status" value="1"/>
</dbReference>
<dbReference type="FunFam" id="3.30.930.10:FF:000065">
    <property type="entry name" value="Proline--tRNA ligase"/>
    <property type="match status" value="1"/>
</dbReference>
<dbReference type="FunFam" id="3.30.930.10:FF:000066">
    <property type="entry name" value="Proline--tRNA ligase"/>
    <property type="match status" value="1"/>
</dbReference>
<dbReference type="FunFam" id="3.40.50.800:FF:000011">
    <property type="entry name" value="Proline--tRNA ligase"/>
    <property type="match status" value="1"/>
</dbReference>
<dbReference type="Gene3D" id="3.40.50.800">
    <property type="entry name" value="Anticodon-binding domain"/>
    <property type="match status" value="1"/>
</dbReference>
<dbReference type="Gene3D" id="3.30.930.10">
    <property type="entry name" value="Bira Bifunctional Protein, Domain 2"/>
    <property type="match status" value="2"/>
</dbReference>
<dbReference type="HAMAP" id="MF_01569">
    <property type="entry name" value="Pro_tRNA_synth_type1"/>
    <property type="match status" value="1"/>
</dbReference>
<dbReference type="InterPro" id="IPR002314">
    <property type="entry name" value="aa-tRNA-synt_IIb"/>
</dbReference>
<dbReference type="InterPro" id="IPR006195">
    <property type="entry name" value="aa-tRNA-synth_II"/>
</dbReference>
<dbReference type="InterPro" id="IPR045864">
    <property type="entry name" value="aa-tRNA-synth_II/BPL/LPL"/>
</dbReference>
<dbReference type="InterPro" id="IPR004154">
    <property type="entry name" value="Anticodon-bd"/>
</dbReference>
<dbReference type="InterPro" id="IPR036621">
    <property type="entry name" value="Anticodon-bd_dom_sf"/>
</dbReference>
<dbReference type="InterPro" id="IPR002316">
    <property type="entry name" value="Pro-tRNA-ligase_IIa"/>
</dbReference>
<dbReference type="InterPro" id="IPR004500">
    <property type="entry name" value="Pro-tRNA-synth_IIa_bac-type"/>
</dbReference>
<dbReference type="InterPro" id="IPR023717">
    <property type="entry name" value="Pro-tRNA-Synthase_IIa_type1"/>
</dbReference>
<dbReference type="InterPro" id="IPR050062">
    <property type="entry name" value="Pro-tRNA_synthetase"/>
</dbReference>
<dbReference type="InterPro" id="IPR044140">
    <property type="entry name" value="ProRS_anticodon_short"/>
</dbReference>
<dbReference type="InterPro" id="IPR033730">
    <property type="entry name" value="ProRS_core_prok"/>
</dbReference>
<dbReference type="InterPro" id="IPR036754">
    <property type="entry name" value="YbaK/aa-tRNA-synt-asso_dom_sf"/>
</dbReference>
<dbReference type="InterPro" id="IPR007214">
    <property type="entry name" value="YbaK/aa-tRNA-synth-assoc-dom"/>
</dbReference>
<dbReference type="NCBIfam" id="NF006625">
    <property type="entry name" value="PRK09194.1"/>
    <property type="match status" value="1"/>
</dbReference>
<dbReference type="NCBIfam" id="TIGR00409">
    <property type="entry name" value="proS_fam_II"/>
    <property type="match status" value="1"/>
</dbReference>
<dbReference type="PANTHER" id="PTHR42753">
    <property type="entry name" value="MITOCHONDRIAL RIBOSOME PROTEIN L39/PROLYL-TRNA LIGASE FAMILY MEMBER"/>
    <property type="match status" value="1"/>
</dbReference>
<dbReference type="PANTHER" id="PTHR42753:SF2">
    <property type="entry name" value="PROLINE--TRNA LIGASE"/>
    <property type="match status" value="1"/>
</dbReference>
<dbReference type="Pfam" id="PF03129">
    <property type="entry name" value="HGTP_anticodon"/>
    <property type="match status" value="1"/>
</dbReference>
<dbReference type="Pfam" id="PF00587">
    <property type="entry name" value="tRNA-synt_2b"/>
    <property type="match status" value="1"/>
</dbReference>
<dbReference type="Pfam" id="PF04073">
    <property type="entry name" value="tRNA_edit"/>
    <property type="match status" value="1"/>
</dbReference>
<dbReference type="PIRSF" id="PIRSF001535">
    <property type="entry name" value="ProRS_1"/>
    <property type="match status" value="1"/>
</dbReference>
<dbReference type="PRINTS" id="PR01046">
    <property type="entry name" value="TRNASYNTHPRO"/>
</dbReference>
<dbReference type="SUPFAM" id="SSF52954">
    <property type="entry name" value="Class II aaRS ABD-related"/>
    <property type="match status" value="1"/>
</dbReference>
<dbReference type="SUPFAM" id="SSF55681">
    <property type="entry name" value="Class II aaRS and biotin synthetases"/>
    <property type="match status" value="1"/>
</dbReference>
<dbReference type="SUPFAM" id="SSF55826">
    <property type="entry name" value="YbaK/ProRS associated domain"/>
    <property type="match status" value="1"/>
</dbReference>
<dbReference type="PROSITE" id="PS50862">
    <property type="entry name" value="AA_TRNA_LIGASE_II"/>
    <property type="match status" value="1"/>
</dbReference>
<accession>Q8R7S9</accession>
<comment type="function">
    <text evidence="1">Catalyzes the attachment of proline to tRNA(Pro) in a two-step reaction: proline is first activated by ATP to form Pro-AMP and then transferred to the acceptor end of tRNA(Pro). As ProRS can inadvertently accommodate and process non-cognate amino acids such as alanine and cysteine, to avoid such errors it has two additional distinct editing activities against alanine. One activity is designated as 'pretransfer' editing and involves the tRNA(Pro)-independent hydrolysis of activated Ala-AMP. The other activity is designated 'posttransfer' editing and involves deacylation of mischarged Ala-tRNA(Pro). The misacylated Cys-tRNA(Pro) is not edited by ProRS.</text>
</comment>
<comment type="catalytic activity">
    <reaction evidence="1">
        <text>tRNA(Pro) + L-proline + ATP = L-prolyl-tRNA(Pro) + AMP + diphosphate</text>
        <dbReference type="Rhea" id="RHEA:14305"/>
        <dbReference type="Rhea" id="RHEA-COMP:9700"/>
        <dbReference type="Rhea" id="RHEA-COMP:9702"/>
        <dbReference type="ChEBI" id="CHEBI:30616"/>
        <dbReference type="ChEBI" id="CHEBI:33019"/>
        <dbReference type="ChEBI" id="CHEBI:60039"/>
        <dbReference type="ChEBI" id="CHEBI:78442"/>
        <dbReference type="ChEBI" id="CHEBI:78532"/>
        <dbReference type="ChEBI" id="CHEBI:456215"/>
        <dbReference type="EC" id="6.1.1.15"/>
    </reaction>
</comment>
<comment type="subunit">
    <text evidence="1">Homodimer.</text>
</comment>
<comment type="subcellular location">
    <subcellularLocation>
        <location evidence="1">Cytoplasm</location>
    </subcellularLocation>
</comment>
<comment type="domain">
    <text evidence="1">Consists of three domains: the N-terminal catalytic domain, the editing domain and the C-terminal anticodon-binding domain.</text>
</comment>
<comment type="similarity">
    <text evidence="1">Belongs to the class-II aminoacyl-tRNA synthetase family. ProS type 1 subfamily.</text>
</comment>
<protein>
    <recommendedName>
        <fullName evidence="1">Proline--tRNA ligase</fullName>
        <ecNumber evidence="1">6.1.1.15</ecNumber>
    </recommendedName>
    <alternativeName>
        <fullName evidence="1">Prolyl-tRNA synthetase</fullName>
        <shortName evidence="1">ProRS</shortName>
    </alternativeName>
</protein>